<evidence type="ECO:0000250" key="1"/>
<evidence type="ECO:0000250" key="2">
    <source>
        <dbReference type="UniProtKB" id="O08529"/>
    </source>
</evidence>
<evidence type="ECO:0000250" key="3">
    <source>
        <dbReference type="UniProtKB" id="P17655"/>
    </source>
</evidence>
<evidence type="ECO:0000250" key="4">
    <source>
        <dbReference type="UniProtKB" id="Q07009"/>
    </source>
</evidence>
<evidence type="ECO:0000255" key="5">
    <source>
        <dbReference type="PROSITE-ProRule" id="PRU00239"/>
    </source>
</evidence>
<evidence type="ECO:0000255" key="6">
    <source>
        <dbReference type="PROSITE-ProRule" id="PRU00448"/>
    </source>
</evidence>
<evidence type="ECO:0000255" key="7">
    <source>
        <dbReference type="PROSITE-ProRule" id="PRU10088"/>
    </source>
</evidence>
<evidence type="ECO:0000255" key="8">
    <source>
        <dbReference type="PROSITE-ProRule" id="PRU10089"/>
    </source>
</evidence>
<evidence type="ECO:0000255" key="9">
    <source>
        <dbReference type="PROSITE-ProRule" id="PRU10090"/>
    </source>
</evidence>
<evidence type="ECO:0000269" key="10">
    <source>
    </source>
</evidence>
<evidence type="ECO:0000305" key="11"/>
<organism>
    <name type="scientific">Oryctolagus cuniculus</name>
    <name type="common">Rabbit</name>
    <dbReference type="NCBI Taxonomy" id="9986"/>
    <lineage>
        <taxon>Eukaryota</taxon>
        <taxon>Metazoa</taxon>
        <taxon>Chordata</taxon>
        <taxon>Craniata</taxon>
        <taxon>Vertebrata</taxon>
        <taxon>Euteleostomi</taxon>
        <taxon>Mammalia</taxon>
        <taxon>Eutheria</taxon>
        <taxon>Euarchontoglires</taxon>
        <taxon>Glires</taxon>
        <taxon>Lagomorpha</taxon>
        <taxon>Leporidae</taxon>
        <taxon>Oryctolagus</taxon>
    </lineage>
</organism>
<accession>P06814</accession>
<dbReference type="EC" id="3.4.22.53"/>
<dbReference type="EMBL" id="M13797">
    <property type="protein sequence ID" value="AAA31455.1"/>
    <property type="molecule type" value="mRNA"/>
</dbReference>
<dbReference type="PIR" id="B24815">
    <property type="entry name" value="B24815"/>
</dbReference>
<dbReference type="SMR" id="P06814"/>
<dbReference type="STRING" id="9986.ENSOCUP00000017627"/>
<dbReference type="MEROPS" id="C02.972"/>
<dbReference type="PaxDb" id="9986-ENSOCUP00000017627"/>
<dbReference type="eggNOG" id="KOG0045">
    <property type="taxonomic scope" value="Eukaryota"/>
</dbReference>
<dbReference type="InParanoid" id="P06814"/>
<dbReference type="BRENDA" id="3.4.22.53">
    <property type="organism ID" value="1749"/>
</dbReference>
<dbReference type="Proteomes" id="UP000001811">
    <property type="component" value="Unplaced"/>
</dbReference>
<dbReference type="GO" id="GO:0005737">
    <property type="term" value="C:cytoplasm"/>
    <property type="evidence" value="ECO:0000250"/>
    <property type="project" value="UniProtKB"/>
</dbReference>
<dbReference type="GO" id="GO:0030425">
    <property type="term" value="C:dendrite"/>
    <property type="evidence" value="ECO:0000250"/>
    <property type="project" value="UniProtKB"/>
</dbReference>
<dbReference type="GO" id="GO:0005886">
    <property type="term" value="C:plasma membrane"/>
    <property type="evidence" value="ECO:0007669"/>
    <property type="project" value="UniProtKB-SubCell"/>
</dbReference>
<dbReference type="GO" id="GO:0005509">
    <property type="term" value="F:calcium ion binding"/>
    <property type="evidence" value="ECO:0007669"/>
    <property type="project" value="InterPro"/>
</dbReference>
<dbReference type="GO" id="GO:0004198">
    <property type="term" value="F:calcium-dependent cysteine-type endopeptidase activity"/>
    <property type="evidence" value="ECO:0000250"/>
    <property type="project" value="UniProtKB"/>
</dbReference>
<dbReference type="GO" id="GO:0071230">
    <property type="term" value="P:cellular response to amino acid stimulus"/>
    <property type="evidence" value="ECO:0000250"/>
    <property type="project" value="UniProtKB"/>
</dbReference>
<dbReference type="GO" id="GO:0006508">
    <property type="term" value="P:proteolysis"/>
    <property type="evidence" value="ECO:0000250"/>
    <property type="project" value="UniProtKB"/>
</dbReference>
<dbReference type="CDD" id="cd00214">
    <property type="entry name" value="Calpain_III"/>
    <property type="match status" value="1"/>
</dbReference>
<dbReference type="FunFam" id="2.60.120.380:FF:000001">
    <property type="entry name" value="Calpain-1 catalytic subunit"/>
    <property type="match status" value="1"/>
</dbReference>
<dbReference type="FunFam" id="1.10.238.10:FF:000099">
    <property type="entry name" value="calpain-2 catalytic subunit"/>
    <property type="match status" value="1"/>
</dbReference>
<dbReference type="Gene3D" id="2.60.120.380">
    <property type="match status" value="1"/>
</dbReference>
<dbReference type="Gene3D" id="3.90.70.10">
    <property type="entry name" value="Cysteine proteinases"/>
    <property type="match status" value="1"/>
</dbReference>
<dbReference type="Gene3D" id="1.10.238.10">
    <property type="entry name" value="EF-hand"/>
    <property type="match status" value="1"/>
</dbReference>
<dbReference type="InterPro" id="IPR033883">
    <property type="entry name" value="C2_III"/>
</dbReference>
<dbReference type="InterPro" id="IPR022684">
    <property type="entry name" value="Calpain_cysteine_protease"/>
</dbReference>
<dbReference type="InterPro" id="IPR022682">
    <property type="entry name" value="Calpain_domain_III"/>
</dbReference>
<dbReference type="InterPro" id="IPR022683">
    <property type="entry name" value="Calpain_III"/>
</dbReference>
<dbReference type="InterPro" id="IPR036213">
    <property type="entry name" value="Calpain_III_sf"/>
</dbReference>
<dbReference type="InterPro" id="IPR011992">
    <property type="entry name" value="EF-hand-dom_pair"/>
</dbReference>
<dbReference type="InterPro" id="IPR018247">
    <property type="entry name" value="EF_Hand_1_Ca_BS"/>
</dbReference>
<dbReference type="InterPro" id="IPR002048">
    <property type="entry name" value="EF_hand_dom"/>
</dbReference>
<dbReference type="InterPro" id="IPR038765">
    <property type="entry name" value="Papain-like_cys_pep_sf"/>
</dbReference>
<dbReference type="InterPro" id="IPR001300">
    <property type="entry name" value="Peptidase_C2_calpain_cat"/>
</dbReference>
<dbReference type="PANTHER" id="PTHR10183">
    <property type="entry name" value="CALPAIN"/>
    <property type="match status" value="1"/>
</dbReference>
<dbReference type="PANTHER" id="PTHR10183:SF268">
    <property type="entry name" value="CALPAIN-2 CATALYTIC SUBUNIT"/>
    <property type="match status" value="1"/>
</dbReference>
<dbReference type="Pfam" id="PF01067">
    <property type="entry name" value="Calpain_III"/>
    <property type="match status" value="1"/>
</dbReference>
<dbReference type="Pfam" id="PF13833">
    <property type="entry name" value="EF-hand_8"/>
    <property type="match status" value="1"/>
</dbReference>
<dbReference type="Pfam" id="PF00648">
    <property type="entry name" value="Peptidase_C2"/>
    <property type="match status" value="1"/>
</dbReference>
<dbReference type="PRINTS" id="PR00704">
    <property type="entry name" value="CALPAIN"/>
</dbReference>
<dbReference type="SMART" id="SM00720">
    <property type="entry name" value="calpain_III"/>
    <property type="match status" value="1"/>
</dbReference>
<dbReference type="SMART" id="SM00054">
    <property type="entry name" value="EFh"/>
    <property type="match status" value="3"/>
</dbReference>
<dbReference type="SUPFAM" id="SSF49758">
    <property type="entry name" value="Calpain large subunit, middle domain (domain III)"/>
    <property type="match status" value="1"/>
</dbReference>
<dbReference type="SUPFAM" id="SSF54001">
    <property type="entry name" value="Cysteine proteinases"/>
    <property type="match status" value="1"/>
</dbReference>
<dbReference type="SUPFAM" id="SSF47473">
    <property type="entry name" value="EF-hand"/>
    <property type="match status" value="1"/>
</dbReference>
<dbReference type="PROSITE" id="PS50203">
    <property type="entry name" value="CALPAIN_CAT"/>
    <property type="match status" value="1"/>
</dbReference>
<dbReference type="PROSITE" id="PS00018">
    <property type="entry name" value="EF_HAND_1"/>
    <property type="match status" value="2"/>
</dbReference>
<dbReference type="PROSITE" id="PS50222">
    <property type="entry name" value="EF_HAND_2"/>
    <property type="match status" value="3"/>
</dbReference>
<comment type="function">
    <text evidence="2 3">Calcium-regulated non-lysosomal thiol-protease which catalyzes limited proteolysis of substrates involved in cytoskeletal remodeling and signal transduction. Proteolytically cleaves MYOC at 'Arg-226'. Proteolytically cleaves CPEB3 following neuronal stimulation which abolishes CPEB3 translational repressor activity, leading to translation of CPEB3 target mRNAs.</text>
</comment>
<comment type="catalytic activity">
    <reaction>
        <text>Broad endopeptidase specificity.</text>
        <dbReference type="EC" id="3.4.22.53"/>
    </reaction>
</comment>
<comment type="cofactor">
    <cofactor evidence="1">
        <name>Ca(2+)</name>
        <dbReference type="ChEBI" id="CHEBI:29108"/>
    </cofactor>
    <text evidence="1">Binds 7 Ca(2+) ions.</text>
</comment>
<comment type="activity regulation">
    <text>Activated by 200-1000 micromolar concentrations of calcium and inhibited by calpastatin.</text>
</comment>
<comment type="subunit">
    <text evidence="2 4">Forms a heterodimer with a small (regulatory) subunit (CAPNS1). Interacts with CPEB3; this leads to cleavage of CPEB3.</text>
</comment>
<comment type="subcellular location">
    <subcellularLocation>
        <location>Cytoplasm</location>
    </subcellularLocation>
    <subcellularLocation>
        <location>Cell membrane</location>
    </subcellularLocation>
    <text>Translocates to the plasma membrane upon Ca(2+) binding.</text>
</comment>
<comment type="tissue specificity">
    <text>Ubiquitous.</text>
</comment>
<comment type="similarity">
    <text evidence="11">Belongs to the peptidase C2 family.</text>
</comment>
<sequence length="422" mass="49494">QKLIRIRNPWGEVEWTGRWNDNCPNWNTVDPEVRERLAERHEDGEFWMSFSDFLRHYSRLEICNLTPDTLTSDTYKKWKLTKMDGNWRRGSTAGGCRNYPNTFWMNPQYVIKLEEEDEDQEDGESGCTFLVGLIQKHRRRQRKMGEDMHTIGFGIYEVPEELRGQTNIHLGKNFFLTTRARERSDTFINLREVLNRFKLPPGEYILVPSTFEPNKNGDFCVRVFSEKKADYQAVDDEIEADLEEADVSEDDIDDGFRRLFAQLAGEDAEISAFELQNILRRVLAKRQDIKTDGLSIETCKIMVDMLDSDGTGKLGLKEFYVLWTKIQKYQKIYREIDVDRSGTMNSYEMRKALEEAGFKLPCQLHEVIVARFADDQLIIDFDNFVRCLVRLETLFKIFKQLDPDNTGMIQLDLISWLCFSVL</sequence>
<name>CAN2_RABIT</name>
<reference key="1">
    <citation type="journal article" date="1986" name="J. Biol. Chem.">
        <title>Isolation and sequence analyses of cDNA clones for the large subunits of two isozymes of rabbit calcium-dependent protease.</title>
        <authorList>
            <person name="Emori Y."/>
            <person name="Kawasaki H."/>
            <person name="Sugihara H."/>
            <person name="Imajoh S."/>
            <person name="Kawashima S."/>
            <person name="Suzuki K."/>
        </authorList>
    </citation>
    <scope>NUCLEOTIDE SEQUENCE [MRNA]</scope>
</reference>
<reference key="2">
    <citation type="journal article" date="1987" name="J. Biochem.">
        <title>E-F hand structure-domain of calcium-activated neutral protease (CANP) can bind Ca2+ ions.</title>
        <authorList>
            <person name="Minami Y."/>
            <person name="Emori Y."/>
            <person name="Kawasaki H."/>
            <person name="Suzuki K."/>
        </authorList>
    </citation>
    <scope>CALCIUM-BINDING DATA</scope>
</reference>
<proteinExistence type="evidence at protein level"/>
<gene>
    <name type="primary">CAPN2</name>
</gene>
<keyword id="KW-0106">Calcium</keyword>
<keyword id="KW-1003">Cell membrane</keyword>
<keyword id="KW-0963">Cytoplasm</keyword>
<keyword id="KW-0378">Hydrolase</keyword>
<keyword id="KW-0472">Membrane</keyword>
<keyword id="KW-0479">Metal-binding</keyword>
<keyword id="KW-0645">Protease</keyword>
<keyword id="KW-1185">Reference proteome</keyword>
<keyword id="KW-0677">Repeat</keyword>
<keyword id="KW-0788">Thiol protease</keyword>
<feature type="chain" id="PRO_0000207704" description="Calpain-2 catalytic subunit">
    <location>
        <begin position="1" status="less than"/>
        <end position="422"/>
    </location>
</feature>
<feature type="domain" description="Calpain catalytic" evidence="5">
    <location>
        <begin position="1" status="less than"/>
        <end position="66"/>
    </location>
</feature>
<feature type="domain" description="EF-hand 1" evidence="6">
    <location>
        <begin position="294"/>
        <end position="327"/>
    </location>
</feature>
<feature type="domain" description="EF-hand 2" evidence="6">
    <location>
        <begin position="324"/>
        <end position="359"/>
    </location>
</feature>
<feature type="domain" description="EF-hand 3" evidence="6">
    <location>
        <begin position="389"/>
        <end position="422"/>
    </location>
</feature>
<feature type="region of interest" description="Domain III">
    <location>
        <begin position="67"/>
        <end position="236"/>
    </location>
</feature>
<feature type="region of interest" description="Linker">
    <location>
        <begin position="237"/>
        <end position="251"/>
    </location>
</feature>
<feature type="region of interest" description="Domain IV">
    <location>
        <begin position="252"/>
        <end position="422"/>
    </location>
</feature>
<feature type="active site" evidence="5 7 8 9">
    <location>
        <position position="8"/>
    </location>
</feature>
<feature type="binding site" evidence="1">
    <location>
        <position position="14"/>
    </location>
    <ligand>
        <name>Ca(2+)</name>
        <dbReference type="ChEBI" id="CHEBI:29108"/>
        <label>4</label>
    </ligand>
</feature>
<feature type="binding site" evidence="1">
    <location>
        <position position="21"/>
    </location>
    <ligand>
        <name>Ca(2+)</name>
        <dbReference type="ChEBI" id="CHEBI:29108"/>
        <label>4</label>
    </ligand>
</feature>
<feature type="binding site" evidence="1">
    <location>
        <position position="45"/>
    </location>
    <ligand>
        <name>Ca(2+)</name>
        <dbReference type="ChEBI" id="CHEBI:29108"/>
        <label>4</label>
    </ligand>
</feature>
<feature type="binding site" evidence="1">
    <location>
        <position position="264"/>
    </location>
    <ligand>
        <name>Ca(2+)</name>
        <dbReference type="ChEBI" id="CHEBI:29108"/>
        <label>5</label>
    </ligand>
</feature>
<feature type="binding site" evidence="1">
    <location>
        <position position="267"/>
    </location>
    <ligand>
        <name>Ca(2+)</name>
        <dbReference type="ChEBI" id="CHEBI:29108"/>
        <label>5</label>
    </ligand>
</feature>
<feature type="binding site" evidence="1">
    <location>
        <position position="269"/>
    </location>
    <ligand>
        <name>Ca(2+)</name>
        <dbReference type="ChEBI" id="CHEBI:29108"/>
        <label>5</label>
    </ligand>
</feature>
<feature type="binding site" evidence="1">
    <location>
        <position position="274"/>
    </location>
    <ligand>
        <name>Ca(2+)</name>
        <dbReference type="ChEBI" id="CHEBI:29108"/>
        <label>5</label>
    </ligand>
</feature>
<feature type="binding site" evidence="6 10">
    <location>
        <position position="307"/>
    </location>
    <ligand>
        <name>Ca(2+)</name>
        <dbReference type="ChEBI" id="CHEBI:29108"/>
        <label>6</label>
    </ligand>
</feature>
<feature type="binding site" evidence="6 10">
    <location>
        <position position="309"/>
    </location>
    <ligand>
        <name>Ca(2+)</name>
        <dbReference type="ChEBI" id="CHEBI:29108"/>
        <label>6</label>
    </ligand>
</feature>
<feature type="binding site" evidence="6 10">
    <location>
        <position position="311"/>
    </location>
    <ligand>
        <name>Ca(2+)</name>
        <dbReference type="ChEBI" id="CHEBI:29108"/>
        <label>6</label>
    </ligand>
</feature>
<feature type="binding site" evidence="6 10">
    <location>
        <position position="313"/>
    </location>
    <ligand>
        <name>Ca(2+)</name>
        <dbReference type="ChEBI" id="CHEBI:29108"/>
        <label>6</label>
    </ligand>
</feature>
<feature type="binding site" evidence="6 10">
    <location>
        <position position="318"/>
    </location>
    <ligand>
        <name>Ca(2+)</name>
        <dbReference type="ChEBI" id="CHEBI:29108"/>
        <label>1</label>
    </ligand>
</feature>
<feature type="binding site" evidence="6 10">
    <location>
        <position position="337"/>
    </location>
    <ligand>
        <name>Ca(2+)</name>
        <dbReference type="ChEBI" id="CHEBI:29108"/>
        <label>7</label>
    </ligand>
</feature>
<feature type="binding site" evidence="6 10">
    <location>
        <position position="339"/>
    </location>
    <ligand>
        <name>Ca(2+)</name>
        <dbReference type="ChEBI" id="CHEBI:29108"/>
        <label>7</label>
    </ligand>
</feature>
<feature type="binding site" evidence="6 10">
    <location>
        <position position="341"/>
    </location>
    <ligand>
        <name>Ca(2+)</name>
        <dbReference type="ChEBI" id="CHEBI:29108"/>
        <label>7</label>
    </ligand>
</feature>
<feature type="binding site" evidence="6 10">
    <location>
        <position position="343"/>
    </location>
    <ligand>
        <name>Ca(2+)</name>
        <dbReference type="ChEBI" id="CHEBI:29108"/>
        <label>7</label>
    </ligand>
</feature>
<feature type="binding site" evidence="6 10">
    <location>
        <position position="348"/>
    </location>
    <ligand>
        <name>Ca(2+)</name>
        <dbReference type="ChEBI" id="CHEBI:29108"/>
        <label>7</label>
    </ligand>
</feature>
<feature type="binding site" evidence="1">
    <location>
        <position position="380"/>
    </location>
    <ligand>
        <name>Ca(2+)</name>
        <dbReference type="ChEBI" id="CHEBI:29108"/>
        <label>1</label>
    </ligand>
</feature>
<feature type="binding site" evidence="1">
    <location>
        <position position="383"/>
    </location>
    <ligand>
        <name>Ca(2+)</name>
        <dbReference type="ChEBI" id="CHEBI:29108"/>
        <label>1</label>
    </ligand>
</feature>
<feature type="non-terminal residue">
    <location>
        <position position="1"/>
    </location>
</feature>
<protein>
    <recommendedName>
        <fullName>Calpain-2 catalytic subunit</fullName>
        <ecNumber>3.4.22.53</ecNumber>
    </recommendedName>
    <alternativeName>
        <fullName>Calcium-activated neutral proteinase 2</fullName>
        <shortName>CANP 2</shortName>
    </alternativeName>
    <alternativeName>
        <fullName>Calpain M-type</fullName>
    </alternativeName>
    <alternativeName>
        <fullName>Calpain-2 large subunit</fullName>
    </alternativeName>
    <alternativeName>
        <fullName>Millimolar-calpain</fullName>
        <shortName>M-calpain</shortName>
    </alternativeName>
</protein>